<feature type="chain" id="PRO_0000318453" description="Protein translocase subunit SecA">
    <location>
        <begin position="1"/>
        <end position="839"/>
    </location>
</feature>
<feature type="region of interest" description="Disordered" evidence="2">
    <location>
        <begin position="780"/>
        <end position="839"/>
    </location>
</feature>
<feature type="compositionally biased region" description="Basic and acidic residues" evidence="2">
    <location>
        <begin position="780"/>
        <end position="790"/>
    </location>
</feature>
<feature type="compositionally biased region" description="Polar residues" evidence="2">
    <location>
        <begin position="791"/>
        <end position="809"/>
    </location>
</feature>
<feature type="compositionally biased region" description="Basic residues" evidence="2">
    <location>
        <begin position="827"/>
        <end position="839"/>
    </location>
</feature>
<feature type="binding site" evidence="1">
    <location>
        <position position="85"/>
    </location>
    <ligand>
        <name>ATP</name>
        <dbReference type="ChEBI" id="CHEBI:30616"/>
    </ligand>
</feature>
<feature type="binding site" evidence="1">
    <location>
        <begin position="103"/>
        <end position="107"/>
    </location>
    <ligand>
        <name>ATP</name>
        <dbReference type="ChEBI" id="CHEBI:30616"/>
    </ligand>
</feature>
<feature type="binding site" evidence="1">
    <location>
        <position position="493"/>
    </location>
    <ligand>
        <name>ATP</name>
        <dbReference type="ChEBI" id="CHEBI:30616"/>
    </ligand>
</feature>
<feature type="binding site" evidence="1">
    <location>
        <position position="821"/>
    </location>
    <ligand>
        <name>Zn(2+)</name>
        <dbReference type="ChEBI" id="CHEBI:29105"/>
    </ligand>
</feature>
<feature type="binding site" evidence="1">
    <location>
        <position position="823"/>
    </location>
    <ligand>
        <name>Zn(2+)</name>
        <dbReference type="ChEBI" id="CHEBI:29105"/>
    </ligand>
</feature>
<feature type="binding site" evidence="1">
    <location>
        <position position="832"/>
    </location>
    <ligand>
        <name>Zn(2+)</name>
        <dbReference type="ChEBI" id="CHEBI:29105"/>
    </ligand>
</feature>
<feature type="binding site" evidence="1">
    <location>
        <position position="833"/>
    </location>
    <ligand>
        <name>Zn(2+)</name>
        <dbReference type="ChEBI" id="CHEBI:29105"/>
    </ligand>
</feature>
<evidence type="ECO:0000255" key="1">
    <source>
        <dbReference type="HAMAP-Rule" id="MF_01382"/>
    </source>
</evidence>
<evidence type="ECO:0000256" key="2">
    <source>
        <dbReference type="SAM" id="MobiDB-lite"/>
    </source>
</evidence>
<organism>
    <name type="scientific">Streptococcus pyogenes serotype M4 (strain MGAS10750)</name>
    <dbReference type="NCBI Taxonomy" id="370554"/>
    <lineage>
        <taxon>Bacteria</taxon>
        <taxon>Bacillati</taxon>
        <taxon>Bacillota</taxon>
        <taxon>Bacilli</taxon>
        <taxon>Lactobacillales</taxon>
        <taxon>Streptococcaceae</taxon>
        <taxon>Streptococcus</taxon>
    </lineage>
</organism>
<name>SECA_STRPF</name>
<comment type="function">
    <text evidence="1">Part of the Sec protein translocase complex. Interacts with the SecYEG preprotein conducting channel. Has a central role in coupling the hydrolysis of ATP to the transfer of proteins into and across the cell membrane, serving as an ATP-driven molecular motor driving the stepwise translocation of polypeptide chains across the membrane.</text>
</comment>
<comment type="catalytic activity">
    <reaction evidence="1">
        <text>ATP + H2O + cellular proteinSide 1 = ADP + phosphate + cellular proteinSide 2.</text>
        <dbReference type="EC" id="7.4.2.8"/>
    </reaction>
</comment>
<comment type="cofactor">
    <cofactor evidence="1">
        <name>Zn(2+)</name>
        <dbReference type="ChEBI" id="CHEBI:29105"/>
    </cofactor>
    <text evidence="1">May bind 1 zinc ion per subunit.</text>
</comment>
<comment type="subunit">
    <text evidence="1">Monomer and homodimer. Part of the essential Sec protein translocation apparatus which comprises SecA, SecYEG and auxiliary proteins SecDF. Other proteins may also be involved.</text>
</comment>
<comment type="subcellular location">
    <subcellularLocation>
        <location evidence="1">Cell membrane</location>
        <topology evidence="1">Peripheral membrane protein</topology>
        <orientation evidence="1">Cytoplasmic side</orientation>
    </subcellularLocation>
    <subcellularLocation>
        <location evidence="1">Cytoplasm</location>
    </subcellularLocation>
    <text evidence="1">Distribution is 50-50.</text>
</comment>
<comment type="similarity">
    <text evidence="1">Belongs to the SecA family.</text>
</comment>
<keyword id="KW-0067">ATP-binding</keyword>
<keyword id="KW-1003">Cell membrane</keyword>
<keyword id="KW-0963">Cytoplasm</keyword>
<keyword id="KW-0472">Membrane</keyword>
<keyword id="KW-0479">Metal-binding</keyword>
<keyword id="KW-0547">Nucleotide-binding</keyword>
<keyword id="KW-0653">Protein transport</keyword>
<keyword id="KW-1278">Translocase</keyword>
<keyword id="KW-0811">Translocation</keyword>
<keyword id="KW-0813">Transport</keyword>
<keyword id="KW-0862">Zinc</keyword>
<proteinExistence type="inferred from homology"/>
<reference key="1">
    <citation type="journal article" date="2006" name="Proc. Natl. Acad. Sci. U.S.A.">
        <title>Molecular genetic anatomy of inter- and intraserotype variation in the human bacterial pathogen group A Streptococcus.</title>
        <authorList>
            <person name="Beres S.B."/>
            <person name="Richter E.W."/>
            <person name="Nagiec M.J."/>
            <person name="Sumby P."/>
            <person name="Porcella S.F."/>
            <person name="DeLeo F.R."/>
            <person name="Musser J.M."/>
        </authorList>
    </citation>
    <scope>NUCLEOTIDE SEQUENCE [LARGE SCALE GENOMIC DNA]</scope>
    <source>
        <strain>MGAS10750</strain>
    </source>
</reference>
<sequence>MANILRKVIENDKGELRKLEKIAKKVESYADQMASLSDRDLQGKTLEFKERYQKGETLEQLLPEAFAVVREAAKRVLGLFPYRVQIMGGIVLHNGDVPEMRTGEGKTLTATMPVYLNAIAGEGVHVITVNEYLSTRDATEMGEVYSWLGLSVGINLAAKSPAEKREAYNCDITYSTNSEVGFDYLRDNMVVRQEDMVQRPLNFALVDEVDSVLIDEARTPLIVSGAVSSETNQLYIRADMFVKTLTSVDYVIDVPTKTIGLSDSGIDKAESYFNLSNLYDIENVALTHFIDNALRANYIMLLDIDYVVSEDGEILIVDQFTGRTMEGRRFSDGLHQAIEAKEGVRIQEESKTSASITYQNMFRMYKKLAGMTGTAKTEEEEFREVYNMRIIPIPTNRPIARIDHTDLLYPTLESKFRAVVEDVKTRHAKGQPILVGTVAVETSDLISRKLVEAGIPHEVLNAKNHFKEAQIIMNAGQRGAVTIATNMAGRGTDIKLGEGVRELGGLCVIGTERHESRRIDNQLRGRSGRQGDPGESQFYLSLEDDLMRRFGSDRIKAFLDRMKLDEEDTVIKSGMLGRQVESAQKRVEGNNYDTRKQVLQYDDVMREQREIIYANRRDVITANRDLGPEIKAMIKRTIDRAVDAHARSNRKDAVDAIVTFARTSLVPEESISAKELRGLKDEQIKEKLYQRALAIYDQQLSKLRDQEAIIEFQKVLILMIVDNKWTEHIDALDQLRNAVGLRGYAQNNPVVEYQAEGFKMFQDMIGAIEFDVTRTMMKAQIHEQERERASQRATTAAPQNIQSQQSANTDDLPKVERNEACPCGSGKKFKNCHGRKSFS</sequence>
<dbReference type="EC" id="7.4.2.8" evidence="1"/>
<dbReference type="EMBL" id="CP000262">
    <property type="protein sequence ID" value="ABF38543.1"/>
    <property type="molecule type" value="Genomic_DNA"/>
</dbReference>
<dbReference type="SMR" id="Q1J543"/>
<dbReference type="KEGG" id="spi:MGAS10750_Spy1593"/>
<dbReference type="HOGENOM" id="CLU_005314_3_0_9"/>
<dbReference type="Proteomes" id="UP000002434">
    <property type="component" value="Chromosome"/>
</dbReference>
<dbReference type="GO" id="GO:0031522">
    <property type="term" value="C:cell envelope Sec protein transport complex"/>
    <property type="evidence" value="ECO:0007669"/>
    <property type="project" value="TreeGrafter"/>
</dbReference>
<dbReference type="GO" id="GO:0005829">
    <property type="term" value="C:cytosol"/>
    <property type="evidence" value="ECO:0007669"/>
    <property type="project" value="TreeGrafter"/>
</dbReference>
<dbReference type="GO" id="GO:0005886">
    <property type="term" value="C:plasma membrane"/>
    <property type="evidence" value="ECO:0007669"/>
    <property type="project" value="UniProtKB-SubCell"/>
</dbReference>
<dbReference type="GO" id="GO:0005524">
    <property type="term" value="F:ATP binding"/>
    <property type="evidence" value="ECO:0007669"/>
    <property type="project" value="UniProtKB-UniRule"/>
</dbReference>
<dbReference type="GO" id="GO:0046872">
    <property type="term" value="F:metal ion binding"/>
    <property type="evidence" value="ECO:0007669"/>
    <property type="project" value="UniProtKB-KW"/>
</dbReference>
<dbReference type="GO" id="GO:0008564">
    <property type="term" value="F:protein-exporting ATPase activity"/>
    <property type="evidence" value="ECO:0007669"/>
    <property type="project" value="UniProtKB-EC"/>
</dbReference>
<dbReference type="GO" id="GO:0065002">
    <property type="term" value="P:intracellular protein transmembrane transport"/>
    <property type="evidence" value="ECO:0007669"/>
    <property type="project" value="UniProtKB-UniRule"/>
</dbReference>
<dbReference type="GO" id="GO:0017038">
    <property type="term" value="P:protein import"/>
    <property type="evidence" value="ECO:0007669"/>
    <property type="project" value="InterPro"/>
</dbReference>
<dbReference type="GO" id="GO:0006605">
    <property type="term" value="P:protein targeting"/>
    <property type="evidence" value="ECO:0007669"/>
    <property type="project" value="UniProtKB-UniRule"/>
</dbReference>
<dbReference type="GO" id="GO:0043952">
    <property type="term" value="P:protein transport by the Sec complex"/>
    <property type="evidence" value="ECO:0007669"/>
    <property type="project" value="TreeGrafter"/>
</dbReference>
<dbReference type="CDD" id="cd17928">
    <property type="entry name" value="DEXDc_SecA"/>
    <property type="match status" value="1"/>
</dbReference>
<dbReference type="CDD" id="cd18803">
    <property type="entry name" value="SF2_C_secA"/>
    <property type="match status" value="1"/>
</dbReference>
<dbReference type="FunFam" id="1.10.3060.10:FF:000002">
    <property type="entry name" value="Preprotein translocase subunit SecA"/>
    <property type="match status" value="1"/>
</dbReference>
<dbReference type="FunFam" id="3.40.50.300:FF:000429">
    <property type="entry name" value="Preprotein translocase subunit SecA"/>
    <property type="match status" value="1"/>
</dbReference>
<dbReference type="FunFam" id="3.90.1440.10:FF:000001">
    <property type="entry name" value="Preprotein translocase subunit SecA"/>
    <property type="match status" value="1"/>
</dbReference>
<dbReference type="Gene3D" id="1.10.3060.10">
    <property type="entry name" value="Helical scaffold and wing domains of SecA"/>
    <property type="match status" value="1"/>
</dbReference>
<dbReference type="Gene3D" id="3.40.50.300">
    <property type="entry name" value="P-loop containing nucleotide triphosphate hydrolases"/>
    <property type="match status" value="3"/>
</dbReference>
<dbReference type="Gene3D" id="3.90.1440.10">
    <property type="entry name" value="SecA, preprotein cross-linking domain"/>
    <property type="match status" value="1"/>
</dbReference>
<dbReference type="HAMAP" id="MF_01382">
    <property type="entry name" value="SecA"/>
    <property type="match status" value="1"/>
</dbReference>
<dbReference type="InterPro" id="IPR014001">
    <property type="entry name" value="Helicase_ATP-bd"/>
</dbReference>
<dbReference type="InterPro" id="IPR001650">
    <property type="entry name" value="Helicase_C-like"/>
</dbReference>
<dbReference type="InterPro" id="IPR027417">
    <property type="entry name" value="P-loop_NTPase"/>
</dbReference>
<dbReference type="InterPro" id="IPR004027">
    <property type="entry name" value="SEC_C_motif"/>
</dbReference>
<dbReference type="InterPro" id="IPR000185">
    <property type="entry name" value="SecA"/>
</dbReference>
<dbReference type="InterPro" id="IPR020937">
    <property type="entry name" value="SecA_CS"/>
</dbReference>
<dbReference type="InterPro" id="IPR011115">
    <property type="entry name" value="SecA_DEAD"/>
</dbReference>
<dbReference type="InterPro" id="IPR014018">
    <property type="entry name" value="SecA_motor_DEAD"/>
</dbReference>
<dbReference type="InterPro" id="IPR011130">
    <property type="entry name" value="SecA_preprotein_X-link_dom"/>
</dbReference>
<dbReference type="InterPro" id="IPR044722">
    <property type="entry name" value="SecA_SF2_C"/>
</dbReference>
<dbReference type="InterPro" id="IPR011116">
    <property type="entry name" value="SecA_Wing/Scaffold"/>
</dbReference>
<dbReference type="InterPro" id="IPR036266">
    <property type="entry name" value="SecA_Wing/Scaffold_sf"/>
</dbReference>
<dbReference type="InterPro" id="IPR036670">
    <property type="entry name" value="SecA_X-link_sf"/>
</dbReference>
<dbReference type="NCBIfam" id="NF006630">
    <property type="entry name" value="PRK09200.1"/>
    <property type="match status" value="1"/>
</dbReference>
<dbReference type="NCBIfam" id="TIGR00963">
    <property type="entry name" value="secA"/>
    <property type="match status" value="1"/>
</dbReference>
<dbReference type="PANTHER" id="PTHR30612:SF0">
    <property type="entry name" value="CHLOROPLAST PROTEIN-TRANSPORTING ATPASE"/>
    <property type="match status" value="1"/>
</dbReference>
<dbReference type="PANTHER" id="PTHR30612">
    <property type="entry name" value="SECA INNER MEMBRANE COMPONENT OF SEC PROTEIN SECRETION SYSTEM"/>
    <property type="match status" value="1"/>
</dbReference>
<dbReference type="Pfam" id="PF21090">
    <property type="entry name" value="P-loop_SecA"/>
    <property type="match status" value="2"/>
</dbReference>
<dbReference type="Pfam" id="PF02810">
    <property type="entry name" value="SEC-C"/>
    <property type="match status" value="1"/>
</dbReference>
<dbReference type="Pfam" id="PF07517">
    <property type="entry name" value="SecA_DEAD"/>
    <property type="match status" value="1"/>
</dbReference>
<dbReference type="Pfam" id="PF01043">
    <property type="entry name" value="SecA_PP_bind"/>
    <property type="match status" value="1"/>
</dbReference>
<dbReference type="Pfam" id="PF07516">
    <property type="entry name" value="SecA_SW"/>
    <property type="match status" value="1"/>
</dbReference>
<dbReference type="PRINTS" id="PR00906">
    <property type="entry name" value="SECA"/>
</dbReference>
<dbReference type="SMART" id="SM00957">
    <property type="entry name" value="SecA_DEAD"/>
    <property type="match status" value="1"/>
</dbReference>
<dbReference type="SMART" id="SM00958">
    <property type="entry name" value="SecA_PP_bind"/>
    <property type="match status" value="1"/>
</dbReference>
<dbReference type="SUPFAM" id="SSF81886">
    <property type="entry name" value="Helical scaffold and wing domains of SecA"/>
    <property type="match status" value="1"/>
</dbReference>
<dbReference type="SUPFAM" id="SSF52540">
    <property type="entry name" value="P-loop containing nucleoside triphosphate hydrolases"/>
    <property type="match status" value="2"/>
</dbReference>
<dbReference type="SUPFAM" id="SSF81767">
    <property type="entry name" value="Pre-protein crosslinking domain of SecA"/>
    <property type="match status" value="1"/>
</dbReference>
<dbReference type="PROSITE" id="PS01312">
    <property type="entry name" value="SECA"/>
    <property type="match status" value="1"/>
</dbReference>
<dbReference type="PROSITE" id="PS51196">
    <property type="entry name" value="SECA_MOTOR_DEAD"/>
    <property type="match status" value="1"/>
</dbReference>
<gene>
    <name evidence="1" type="primary">secA</name>
    <name type="ordered locus">MGAS10750_Spy1593</name>
</gene>
<protein>
    <recommendedName>
        <fullName evidence="1">Protein translocase subunit SecA</fullName>
        <ecNumber evidence="1">7.4.2.8</ecNumber>
    </recommendedName>
</protein>
<accession>Q1J543</accession>